<dbReference type="EC" id="6.3.5.2" evidence="1"/>
<dbReference type="EMBL" id="BX897700">
    <property type="protein sequence ID" value="CAF25674.1"/>
    <property type="molecule type" value="Genomic_DNA"/>
</dbReference>
<dbReference type="RefSeq" id="WP_011178989.1">
    <property type="nucleotide sequence ID" value="NC_005955.1"/>
</dbReference>
<dbReference type="SMR" id="Q6G197"/>
<dbReference type="MEROPS" id="C26.957"/>
<dbReference type="KEGG" id="bqu:BQ01710"/>
<dbReference type="eggNOG" id="COG0518">
    <property type="taxonomic scope" value="Bacteria"/>
</dbReference>
<dbReference type="eggNOG" id="COG0519">
    <property type="taxonomic scope" value="Bacteria"/>
</dbReference>
<dbReference type="HOGENOM" id="CLU_014340_0_5_5"/>
<dbReference type="OrthoDB" id="9802219at2"/>
<dbReference type="UniPathway" id="UPA00189">
    <property type="reaction ID" value="UER00296"/>
</dbReference>
<dbReference type="Proteomes" id="UP000000597">
    <property type="component" value="Chromosome"/>
</dbReference>
<dbReference type="GO" id="GO:0005829">
    <property type="term" value="C:cytosol"/>
    <property type="evidence" value="ECO:0007669"/>
    <property type="project" value="TreeGrafter"/>
</dbReference>
<dbReference type="GO" id="GO:0005524">
    <property type="term" value="F:ATP binding"/>
    <property type="evidence" value="ECO:0007669"/>
    <property type="project" value="UniProtKB-UniRule"/>
</dbReference>
<dbReference type="GO" id="GO:0003921">
    <property type="term" value="F:GMP synthase activity"/>
    <property type="evidence" value="ECO:0007669"/>
    <property type="project" value="InterPro"/>
</dbReference>
<dbReference type="CDD" id="cd01742">
    <property type="entry name" value="GATase1_GMP_Synthase"/>
    <property type="match status" value="1"/>
</dbReference>
<dbReference type="CDD" id="cd01997">
    <property type="entry name" value="GMP_synthase_C"/>
    <property type="match status" value="1"/>
</dbReference>
<dbReference type="FunFam" id="3.30.300.10:FF:000002">
    <property type="entry name" value="GMP synthase [glutamine-hydrolyzing]"/>
    <property type="match status" value="1"/>
</dbReference>
<dbReference type="FunFam" id="3.40.50.620:FF:000001">
    <property type="entry name" value="GMP synthase [glutamine-hydrolyzing]"/>
    <property type="match status" value="1"/>
</dbReference>
<dbReference type="FunFam" id="3.40.50.880:FF:000001">
    <property type="entry name" value="GMP synthase [glutamine-hydrolyzing]"/>
    <property type="match status" value="1"/>
</dbReference>
<dbReference type="Gene3D" id="3.30.300.10">
    <property type="match status" value="1"/>
</dbReference>
<dbReference type="Gene3D" id="3.40.50.880">
    <property type="match status" value="1"/>
</dbReference>
<dbReference type="Gene3D" id="3.40.50.620">
    <property type="entry name" value="HUPs"/>
    <property type="match status" value="1"/>
</dbReference>
<dbReference type="HAMAP" id="MF_00344">
    <property type="entry name" value="GMP_synthase"/>
    <property type="match status" value="1"/>
</dbReference>
<dbReference type="InterPro" id="IPR029062">
    <property type="entry name" value="Class_I_gatase-like"/>
</dbReference>
<dbReference type="InterPro" id="IPR017926">
    <property type="entry name" value="GATASE"/>
</dbReference>
<dbReference type="InterPro" id="IPR001674">
    <property type="entry name" value="GMP_synth_C"/>
</dbReference>
<dbReference type="InterPro" id="IPR004739">
    <property type="entry name" value="GMP_synth_GATase"/>
</dbReference>
<dbReference type="InterPro" id="IPR022955">
    <property type="entry name" value="GMP_synthase"/>
</dbReference>
<dbReference type="InterPro" id="IPR025777">
    <property type="entry name" value="GMPS_ATP_PPase_dom"/>
</dbReference>
<dbReference type="InterPro" id="IPR022310">
    <property type="entry name" value="NAD/GMP_synthase"/>
</dbReference>
<dbReference type="InterPro" id="IPR014729">
    <property type="entry name" value="Rossmann-like_a/b/a_fold"/>
</dbReference>
<dbReference type="NCBIfam" id="TIGR00884">
    <property type="entry name" value="guaA_Cterm"/>
    <property type="match status" value="1"/>
</dbReference>
<dbReference type="NCBIfam" id="TIGR00888">
    <property type="entry name" value="guaA_Nterm"/>
    <property type="match status" value="1"/>
</dbReference>
<dbReference type="NCBIfam" id="NF000848">
    <property type="entry name" value="PRK00074.1"/>
    <property type="match status" value="1"/>
</dbReference>
<dbReference type="PANTHER" id="PTHR11922:SF2">
    <property type="entry name" value="GMP SYNTHASE [GLUTAMINE-HYDROLYZING]"/>
    <property type="match status" value="1"/>
</dbReference>
<dbReference type="PANTHER" id="PTHR11922">
    <property type="entry name" value="GMP SYNTHASE-RELATED"/>
    <property type="match status" value="1"/>
</dbReference>
<dbReference type="Pfam" id="PF00117">
    <property type="entry name" value="GATase"/>
    <property type="match status" value="1"/>
</dbReference>
<dbReference type="Pfam" id="PF00958">
    <property type="entry name" value="GMP_synt_C"/>
    <property type="match status" value="1"/>
</dbReference>
<dbReference type="Pfam" id="PF02540">
    <property type="entry name" value="NAD_synthase"/>
    <property type="match status" value="1"/>
</dbReference>
<dbReference type="PRINTS" id="PR00096">
    <property type="entry name" value="GATASE"/>
</dbReference>
<dbReference type="SUPFAM" id="SSF52402">
    <property type="entry name" value="Adenine nucleotide alpha hydrolases-like"/>
    <property type="match status" value="1"/>
</dbReference>
<dbReference type="SUPFAM" id="SSF52317">
    <property type="entry name" value="Class I glutamine amidotransferase-like"/>
    <property type="match status" value="1"/>
</dbReference>
<dbReference type="SUPFAM" id="SSF54810">
    <property type="entry name" value="GMP synthetase C-terminal dimerisation domain"/>
    <property type="match status" value="1"/>
</dbReference>
<dbReference type="PROSITE" id="PS51273">
    <property type="entry name" value="GATASE_TYPE_1"/>
    <property type="match status" value="1"/>
</dbReference>
<dbReference type="PROSITE" id="PS51553">
    <property type="entry name" value="GMPS_ATP_PPASE"/>
    <property type="match status" value="1"/>
</dbReference>
<keyword id="KW-0067">ATP-binding</keyword>
<keyword id="KW-0315">Glutamine amidotransferase</keyword>
<keyword id="KW-0332">GMP biosynthesis</keyword>
<keyword id="KW-0436">Ligase</keyword>
<keyword id="KW-0547">Nucleotide-binding</keyword>
<keyword id="KW-0658">Purine biosynthesis</keyword>
<comment type="function">
    <text evidence="1">Catalyzes the synthesis of GMP from XMP.</text>
</comment>
<comment type="catalytic activity">
    <reaction evidence="1">
        <text>XMP + L-glutamine + ATP + H2O = GMP + L-glutamate + AMP + diphosphate + 2 H(+)</text>
        <dbReference type="Rhea" id="RHEA:11680"/>
        <dbReference type="ChEBI" id="CHEBI:15377"/>
        <dbReference type="ChEBI" id="CHEBI:15378"/>
        <dbReference type="ChEBI" id="CHEBI:29985"/>
        <dbReference type="ChEBI" id="CHEBI:30616"/>
        <dbReference type="ChEBI" id="CHEBI:33019"/>
        <dbReference type="ChEBI" id="CHEBI:57464"/>
        <dbReference type="ChEBI" id="CHEBI:58115"/>
        <dbReference type="ChEBI" id="CHEBI:58359"/>
        <dbReference type="ChEBI" id="CHEBI:456215"/>
        <dbReference type="EC" id="6.3.5.2"/>
    </reaction>
</comment>
<comment type="pathway">
    <text evidence="1">Purine metabolism; GMP biosynthesis; GMP from XMP (L-Gln route): step 1/1.</text>
</comment>
<comment type="subunit">
    <text evidence="1">Homodimer.</text>
</comment>
<gene>
    <name evidence="1" type="primary">guaA</name>
    <name type="ordered locus">BQ01710</name>
</gene>
<accession>Q6G197</accession>
<protein>
    <recommendedName>
        <fullName evidence="1">GMP synthase [glutamine-hydrolyzing]</fullName>
        <ecNumber evidence="1">6.3.5.2</ecNumber>
    </recommendedName>
    <alternativeName>
        <fullName evidence="1">GMP synthetase</fullName>
    </alternativeName>
    <alternativeName>
        <fullName evidence="1">Glutamine amidotransferase</fullName>
    </alternativeName>
</protein>
<organism>
    <name type="scientific">Bartonella quintana (strain Toulouse)</name>
    <name type="common">Rochalimaea quintana</name>
    <dbReference type="NCBI Taxonomy" id="283165"/>
    <lineage>
        <taxon>Bacteria</taxon>
        <taxon>Pseudomonadati</taxon>
        <taxon>Pseudomonadota</taxon>
        <taxon>Alphaproteobacteria</taxon>
        <taxon>Hyphomicrobiales</taxon>
        <taxon>Bartonellaceae</taxon>
        <taxon>Bartonella</taxon>
    </lineage>
</organism>
<reference key="1">
    <citation type="journal article" date="2004" name="Proc. Natl. Acad. Sci. U.S.A.">
        <title>The louse-borne human pathogen Bartonella quintana is a genomic derivative of the zoonotic agent Bartonella henselae.</title>
        <authorList>
            <person name="Alsmark U.C.M."/>
            <person name="Frank A.C."/>
            <person name="Karlberg E.O."/>
            <person name="Legault B.-A."/>
            <person name="Ardell D.H."/>
            <person name="Canbaeck B."/>
            <person name="Eriksson A.-S."/>
            <person name="Naeslund A.K."/>
            <person name="Handley S.A."/>
            <person name="Huvet M."/>
            <person name="La Scola B."/>
            <person name="Holmberg M."/>
            <person name="Andersson S.G.E."/>
        </authorList>
    </citation>
    <scope>NUCLEOTIDE SEQUENCE [LARGE SCALE GENOMIC DNA]</scope>
    <source>
        <strain>Toulouse</strain>
    </source>
</reference>
<feature type="chain" id="PRO_0000229406" description="GMP synthase [glutamine-hydrolyzing]">
    <location>
        <begin position="1"/>
        <end position="518"/>
    </location>
</feature>
<feature type="domain" description="Glutamine amidotransferase type-1" evidence="1">
    <location>
        <begin position="8"/>
        <end position="201"/>
    </location>
</feature>
<feature type="domain" description="GMPS ATP-PPase" evidence="1">
    <location>
        <begin position="202"/>
        <end position="393"/>
    </location>
</feature>
<feature type="active site" description="Nucleophile" evidence="1">
    <location>
        <position position="85"/>
    </location>
</feature>
<feature type="active site" evidence="1">
    <location>
        <position position="175"/>
    </location>
</feature>
<feature type="active site" evidence="1">
    <location>
        <position position="177"/>
    </location>
</feature>
<feature type="binding site" evidence="1">
    <location>
        <begin position="229"/>
        <end position="235"/>
    </location>
    <ligand>
        <name>ATP</name>
        <dbReference type="ChEBI" id="CHEBI:30616"/>
    </ligand>
</feature>
<name>GUAA_BARQU</name>
<evidence type="ECO:0000255" key="1">
    <source>
        <dbReference type="HAMAP-Rule" id="MF_00344"/>
    </source>
</evidence>
<proteinExistence type="inferred from homology"/>
<sequence>MSISHPDTVLIIDFGSQVTQLIARRVRAMGVYCEIVPFQLALEGVKRLRPQAVILSGSPYSVIDDGSPRAPMEIFEIGVPVLGICYGEQVMCVQLGGKVESGHRREFGRAFLEVQEKSALFDGVWEKGSCYQVWMSHGDHVAALPEGFRVIGTSKGAPYAAIADEKRCLYAVQFHPEVVHTPDGTKLLQNFVHKISGLKGNWSMASYRDQAIATIRKKVGKSRVICGLSGGVDSSVVAVLLHEAIGDQLTCILVDHGLMRKNEAEEVLKLFRDHYNIELIHVNAANIFLNALEGETDPEKKRKTIGRLFIEVFEEETKKIEGVEFLAQGTLYPDVIESVSAIGESVTIKSHHNVGGLPERMNMKLVEPLRELFKDEVRSLGRELGLPEQFLGRHPFPGPGLAIRCPGAVTREKLEIIREADAIYLDEICKAGLYDEIWQAFVVLLPVQTVGVMGDGRTYEFVCALRAVTSVDGMTADFYPYDMEFLSKTAARIINEVRGINRVVYDITSKPPGTIEWE</sequence>